<name>COX3_GAZSA</name>
<dbReference type="EC" id="7.1.1.9"/>
<dbReference type="EMBL" id="AF030481">
    <property type="protein sequence ID" value="AAB93620.1"/>
    <property type="molecule type" value="Genomic_DNA"/>
</dbReference>
<dbReference type="SMR" id="O47710"/>
<dbReference type="GO" id="GO:0005743">
    <property type="term" value="C:mitochondrial inner membrane"/>
    <property type="evidence" value="ECO:0007669"/>
    <property type="project" value="UniProtKB-SubCell"/>
</dbReference>
<dbReference type="GO" id="GO:0045277">
    <property type="term" value="C:respiratory chain complex IV"/>
    <property type="evidence" value="ECO:0000250"/>
    <property type="project" value="UniProtKB"/>
</dbReference>
<dbReference type="GO" id="GO:0004129">
    <property type="term" value="F:cytochrome-c oxidase activity"/>
    <property type="evidence" value="ECO:0007669"/>
    <property type="project" value="UniProtKB-EC"/>
</dbReference>
<dbReference type="GO" id="GO:0006123">
    <property type="term" value="P:mitochondrial electron transport, cytochrome c to oxygen"/>
    <property type="evidence" value="ECO:0007669"/>
    <property type="project" value="TreeGrafter"/>
</dbReference>
<dbReference type="GO" id="GO:0008535">
    <property type="term" value="P:respiratory chain complex IV assembly"/>
    <property type="evidence" value="ECO:0000250"/>
    <property type="project" value="UniProtKB"/>
</dbReference>
<dbReference type="CDD" id="cd01665">
    <property type="entry name" value="Cyt_c_Oxidase_III"/>
    <property type="match status" value="1"/>
</dbReference>
<dbReference type="FunFam" id="1.10.287.70:FF:000048">
    <property type="entry name" value="Cytochrome c oxidase subunit 3"/>
    <property type="match status" value="1"/>
</dbReference>
<dbReference type="FunFam" id="1.20.120.80:FF:000002">
    <property type="entry name" value="Cytochrome c oxidase subunit 3"/>
    <property type="match status" value="1"/>
</dbReference>
<dbReference type="Gene3D" id="1.10.287.70">
    <property type="match status" value="1"/>
</dbReference>
<dbReference type="Gene3D" id="1.20.120.80">
    <property type="entry name" value="Cytochrome c oxidase, subunit III, four-helix bundle"/>
    <property type="match status" value="1"/>
</dbReference>
<dbReference type="InterPro" id="IPR024791">
    <property type="entry name" value="Cyt_c/ubiquinol_Oxase_su3"/>
</dbReference>
<dbReference type="InterPro" id="IPR033945">
    <property type="entry name" value="Cyt_c_oxase_su3_dom"/>
</dbReference>
<dbReference type="InterPro" id="IPR000298">
    <property type="entry name" value="Cyt_c_oxidase-like_su3"/>
</dbReference>
<dbReference type="InterPro" id="IPR035973">
    <property type="entry name" value="Cyt_c_oxidase_su3-like_sf"/>
</dbReference>
<dbReference type="InterPro" id="IPR013833">
    <property type="entry name" value="Cyt_c_oxidase_su3_a-hlx"/>
</dbReference>
<dbReference type="PANTHER" id="PTHR11403:SF7">
    <property type="entry name" value="CYTOCHROME C OXIDASE SUBUNIT 3"/>
    <property type="match status" value="1"/>
</dbReference>
<dbReference type="PANTHER" id="PTHR11403">
    <property type="entry name" value="CYTOCHROME C OXIDASE SUBUNIT III"/>
    <property type="match status" value="1"/>
</dbReference>
<dbReference type="Pfam" id="PF00510">
    <property type="entry name" value="COX3"/>
    <property type="match status" value="1"/>
</dbReference>
<dbReference type="SUPFAM" id="SSF81452">
    <property type="entry name" value="Cytochrome c oxidase subunit III-like"/>
    <property type="match status" value="1"/>
</dbReference>
<dbReference type="PROSITE" id="PS50253">
    <property type="entry name" value="COX3"/>
    <property type="match status" value="1"/>
</dbReference>
<comment type="function">
    <text evidence="2">Component of the cytochrome c oxidase, the last enzyme in the mitochondrial electron transport chain which drives oxidative phosphorylation. The respiratory chain contains 3 multisubunit complexes succinate dehydrogenase (complex II, CII), ubiquinol-cytochrome c oxidoreductase (cytochrome b-c1 complex, complex III, CIII) and cytochrome c oxidase (complex IV, CIV), that cooperate to transfer electrons derived from NADH and succinate to molecular oxygen, creating an electrochemical gradient over the inner membrane that drives transmembrane transport and the ATP synthase. Cytochrome c oxidase is the component of the respiratory chain that catalyzes the reduction of oxygen to water. Electrons originating from reduced cytochrome c in the intermembrane space (IMS) are transferred via the dinuclear copper A center (CU(A)) of subunit 2 and heme A of subunit 1 to the active site in subunit 1, a binuclear center (BNC) formed by heme A3 and copper B (CU(B)). The BNC reduces molecular oxygen to 2 water molecules using 4 electrons from cytochrome c in the IMS and 4 protons from the mitochondrial matrix.</text>
</comment>
<comment type="catalytic activity">
    <reaction evidence="2">
        <text>4 Fe(II)-[cytochrome c] + O2 + 8 H(+)(in) = 4 Fe(III)-[cytochrome c] + 2 H2O + 4 H(+)(out)</text>
        <dbReference type="Rhea" id="RHEA:11436"/>
        <dbReference type="Rhea" id="RHEA-COMP:10350"/>
        <dbReference type="Rhea" id="RHEA-COMP:14399"/>
        <dbReference type="ChEBI" id="CHEBI:15377"/>
        <dbReference type="ChEBI" id="CHEBI:15378"/>
        <dbReference type="ChEBI" id="CHEBI:15379"/>
        <dbReference type="ChEBI" id="CHEBI:29033"/>
        <dbReference type="ChEBI" id="CHEBI:29034"/>
        <dbReference type="EC" id="7.1.1.9"/>
    </reaction>
    <physiologicalReaction direction="left-to-right" evidence="2">
        <dbReference type="Rhea" id="RHEA:11437"/>
    </physiologicalReaction>
</comment>
<comment type="subunit">
    <text evidence="1">Component of the cytochrome c oxidase (complex IV, CIV), a multisubunit enzyme composed of 14 subunits. The complex is composed of a catalytic core of 3 subunits MT-CO1, MT-CO2 and MT-CO3, encoded in the mitochondrial DNA, and 11 supernumerary subunits COX4I, COX5A, COX5B, COX6A, COX6B, COX6C, COX7A, COX7B, COX7C, COX8 and NDUFA4, which are encoded in the nuclear genome. The complex exists as a monomer or a dimer and forms supercomplexes (SCs) in the inner mitochondrial membrane with NADH-ubiquinone oxidoreductase (complex I, CI) and ubiquinol-cytochrome c oxidoreductase (cytochrome b-c1 complex, complex III, CIII), resulting in different assemblies (supercomplex SCI(1)III(2)IV(1) and megacomplex MCI(2)III(2)IV(2)).</text>
</comment>
<comment type="subcellular location">
    <subcellularLocation>
        <location evidence="1">Mitochondrion inner membrane</location>
        <topology evidence="1">Multi-pass membrane protein</topology>
    </subcellularLocation>
</comment>
<comment type="similarity">
    <text evidence="3">Belongs to the cytochrome c oxidase subunit 3 family.</text>
</comment>
<keyword id="KW-0472">Membrane</keyword>
<keyword id="KW-0496">Mitochondrion</keyword>
<keyword id="KW-0999">Mitochondrion inner membrane</keyword>
<keyword id="KW-1278">Translocase</keyword>
<keyword id="KW-0812">Transmembrane</keyword>
<keyword id="KW-1133">Transmembrane helix</keyword>
<organism>
    <name type="scientific">Gazella saudiya</name>
    <name type="common">Saudi gazelle</name>
    <dbReference type="NCBI Taxonomy" id="69305"/>
    <lineage>
        <taxon>Eukaryota</taxon>
        <taxon>Metazoa</taxon>
        <taxon>Chordata</taxon>
        <taxon>Craniata</taxon>
        <taxon>Vertebrata</taxon>
        <taxon>Euteleostomi</taxon>
        <taxon>Mammalia</taxon>
        <taxon>Eutheria</taxon>
        <taxon>Laurasiatheria</taxon>
        <taxon>Artiodactyla</taxon>
        <taxon>Ruminantia</taxon>
        <taxon>Pecora</taxon>
        <taxon>Bovidae</taxon>
        <taxon>Antilopinae</taxon>
        <taxon>Gazella</taxon>
    </lineage>
</organism>
<accession>O47710</accession>
<proteinExistence type="inferred from homology"/>
<feature type="chain" id="PRO_0000183783" description="Cytochrome c oxidase subunit 3">
    <location>
        <begin position="1"/>
        <end position="261"/>
    </location>
</feature>
<feature type="topological domain" description="Mitochondrial matrix" evidence="1">
    <location>
        <begin position="1"/>
        <end position="15"/>
    </location>
</feature>
<feature type="transmembrane region" description="Helical; Name=I" evidence="1">
    <location>
        <begin position="16"/>
        <end position="34"/>
    </location>
</feature>
<feature type="topological domain" description="Mitochondrial intermembrane" evidence="1">
    <location>
        <begin position="35"/>
        <end position="40"/>
    </location>
</feature>
<feature type="transmembrane region" description="Helical; Name=II" evidence="1">
    <location>
        <begin position="41"/>
        <end position="66"/>
    </location>
</feature>
<feature type="topological domain" description="Mitochondrial matrix" evidence="1">
    <location>
        <begin position="67"/>
        <end position="72"/>
    </location>
</feature>
<feature type="transmembrane region" description="Helical; Name=III" evidence="1">
    <location>
        <begin position="73"/>
        <end position="105"/>
    </location>
</feature>
<feature type="topological domain" description="Mitochondrial intermembrane" evidence="1">
    <location>
        <begin position="106"/>
        <end position="128"/>
    </location>
</feature>
<feature type="transmembrane region" description="Helical; Name=IV" evidence="1">
    <location>
        <begin position="129"/>
        <end position="152"/>
    </location>
</feature>
<feature type="topological domain" description="Mitochondrial matrix" evidence="1">
    <location>
        <begin position="153"/>
        <end position="155"/>
    </location>
</feature>
<feature type="transmembrane region" description="Helical; Name=V" evidence="1">
    <location>
        <begin position="156"/>
        <end position="183"/>
    </location>
</feature>
<feature type="topological domain" description="Mitochondrial intermembrane" evidence="1">
    <location>
        <begin position="184"/>
        <end position="190"/>
    </location>
</feature>
<feature type="transmembrane region" description="Helical; Name=VI" evidence="1">
    <location>
        <begin position="191"/>
        <end position="223"/>
    </location>
</feature>
<feature type="topological domain" description="Mitochondrial matrix" evidence="1">
    <location>
        <begin position="224"/>
        <end position="232"/>
    </location>
</feature>
<feature type="transmembrane region" description="Helical; Name=VII" evidence="1">
    <location>
        <begin position="233"/>
        <end position="256"/>
    </location>
</feature>
<feature type="topological domain" description="Mitochondrial intermembrane" evidence="1">
    <location>
        <begin position="257"/>
        <end position="261"/>
    </location>
</feature>
<reference key="1">
    <citation type="journal article" date="1999" name="Mol. Phylogenet. Evol.">
        <title>Phylogenetic relationships in the bovid subfamily Antilopinae based on mitochondrial DNA sequences.</title>
        <authorList>
            <person name="Rebholz W.E.R."/>
            <person name="Harley E.H."/>
        </authorList>
    </citation>
    <scope>NUCLEOTIDE SEQUENCE [GENOMIC DNA]</scope>
</reference>
<geneLocation type="mitochondrion"/>
<evidence type="ECO:0000250" key="1">
    <source>
        <dbReference type="UniProtKB" id="P00415"/>
    </source>
</evidence>
<evidence type="ECO:0000250" key="2">
    <source>
        <dbReference type="UniProtKB" id="P00420"/>
    </source>
</evidence>
<evidence type="ECO:0000305" key="3"/>
<sequence>MTHQTHACHMVNPSPWPLTGALSGLLMTSGLIMWFHFNSTTLLMLGLTTNMLTMYQWWRDVIRESTFQGHHTPNVQKGLRYGMILFIISEVLFFTGFFWAFYHSSLAPTPELGGCWPPTGIHPLNPLEVPLLNTSVLLASGVSITWAHHSLMEGNRNHMLQALFITIALGVYFTLLQASEYYEAPFTISDGVYGSTFFVATGFHGLHVIIGSTFLIVCFFRQLKFHFTSSHHFGFEAAAWYWHFVDVVWLFLYVSIYWWGS</sequence>
<gene>
    <name type="primary">MT-CO3</name>
    <name type="synonym">COIII</name>
    <name type="synonym">COXIII</name>
    <name type="synonym">MTCO3</name>
</gene>
<protein>
    <recommendedName>
        <fullName>Cytochrome c oxidase subunit 3</fullName>
        <ecNumber>7.1.1.9</ecNumber>
    </recommendedName>
    <alternativeName>
        <fullName>Cytochrome c oxidase polypeptide III</fullName>
    </alternativeName>
</protein>